<dbReference type="EMBL" id="AF230360">
    <property type="protein sequence ID" value="AAF81409.1"/>
    <property type="molecule type" value="mRNA"/>
</dbReference>
<dbReference type="SMR" id="Q9P4A2"/>
<dbReference type="MEROPS" id="I48.001"/>
<dbReference type="GO" id="GO:0004869">
    <property type="term" value="F:cysteine-type endopeptidase inhibitor activity"/>
    <property type="evidence" value="ECO:0007669"/>
    <property type="project" value="UniProtKB-KW"/>
</dbReference>
<dbReference type="Gene3D" id="2.80.10.50">
    <property type="match status" value="1"/>
</dbReference>
<dbReference type="InterPro" id="IPR019508">
    <property type="entry name" value="Prot_inh_I48_clitocypin"/>
</dbReference>
<dbReference type="Pfam" id="PF10467">
    <property type="entry name" value="Inhibitor_I48"/>
    <property type="match status" value="1"/>
</dbReference>
<feature type="chain" id="PRO_0000195902" description="Clitocypin">
    <location>
        <begin position="1"/>
        <end position="150"/>
    </location>
</feature>
<feature type="sequence conflict" description="In Ref. 1; AAF81409." evidence="6" ref="1">
    <original>EEGGQQ</original>
    <variation>VVGVQG</variation>
    <location>
        <begin position="119"/>
        <end position="124"/>
    </location>
</feature>
<feature type="sequence conflict" description="In Ref. 1; AAF81409." evidence="6" ref="1">
    <original>T</original>
    <variation>V</variation>
    <location>
        <position position="128"/>
    </location>
</feature>
<feature type="sequence conflict" description="In Ref. 1; AAF81409." evidence="6" ref="1">
    <original>G</original>
    <variation>S</variation>
    <location>
        <position position="138"/>
    </location>
</feature>
<feature type="sequence conflict" description="In Ref. 1; AAF81409." evidence="6" ref="1">
    <original>R</original>
    <variation>S</variation>
    <location>
        <position position="145"/>
    </location>
</feature>
<keyword id="KW-0903">Direct protein sequencing</keyword>
<keyword id="KW-0646">Protease inhibitor</keyword>
<keyword id="KW-0789">Thiol protease inhibitor</keyword>
<organism>
    <name type="scientific">Clitocybe nebularis</name>
    <name type="common">Clouded agaric</name>
    <name type="synonym">Lepista nebularis</name>
    <dbReference type="NCBI Taxonomy" id="117024"/>
    <lineage>
        <taxon>Eukaryota</taxon>
        <taxon>Fungi</taxon>
        <taxon>Dikarya</taxon>
        <taxon>Basidiomycota</taxon>
        <taxon>Agaricomycotina</taxon>
        <taxon>Agaricomycetes</taxon>
        <taxon>Agaricomycetidae</taxon>
        <taxon>Agaricales</taxon>
        <taxon>Tricholomatineae</taxon>
        <taxon>Clitocybaceae</taxon>
        <taxon>Clitocybe</taxon>
    </lineage>
</organism>
<gene>
    <name type="primary">Cnc1</name>
</gene>
<sequence>LEDGIYRLRAVTTHNPDPGVGGEYATVEGARRPVKAEPNTPPFFEQQIWQVTRNADGQYTIKYQGLNTPFEYGFSYDELEPNAPVIAGDPKEYILQLVPSTADVYIIRAPIQRIGVDVEEGGQQNTLTYKFFPVDGSGGDRPAWRFTREE</sequence>
<proteinExistence type="evidence at protein level"/>
<evidence type="ECO:0000269" key="1">
    <source>
    </source>
</evidence>
<evidence type="ECO:0000269" key="2">
    <source>
    </source>
</evidence>
<evidence type="ECO:0000269" key="3">
    <source>
    </source>
</evidence>
<evidence type="ECO:0000269" key="4">
    <source>
    </source>
</evidence>
<evidence type="ECO:0000269" key="5">
    <source>
    </source>
</evidence>
<evidence type="ECO:0000305" key="6"/>
<reference key="1">
    <citation type="journal article" date="2000" name="J. Biol. Chem.">
        <title>Clitocypin, a new type of cysteine proteinase inhibitor from fruit bodies of mushroom Clitocybe nebularis.</title>
        <authorList>
            <person name="Brzin J."/>
            <person name="Rogelj B."/>
            <person name="Popovic T."/>
            <person name="Strukelj B."/>
            <person name="Ritonja A."/>
        </authorList>
    </citation>
    <scope>PROTEIN SEQUENCE</scope>
    <scope>NUCLEOTIDE SEQUENCE [MRNA] OF 18-146</scope>
    <scope>FUNCTION</scope>
    <scope>SUBUNIT</scope>
    <scope>MASS SPECTROMETRY</scope>
    <source>
        <tissue>Fruiting body</tissue>
    </source>
</reference>
<reference key="2">
    <citation type="journal article" date="2007" name="Protein Expr. Purif.">
        <title>Comparison of natural and recombinant clitocypins, the fungal cysteine protease inhibitors.</title>
        <authorList>
            <person name="Sabotic J."/>
            <person name="Galesa K."/>
            <person name="Popovic T."/>
            <person name="Leonardi A."/>
            <person name="Brzin J."/>
        </authorList>
    </citation>
    <scope>PROTEIN SEQUENCE OF 1-8</scope>
    <scope>FUNCTION</scope>
    <scope>SUBUNIT</scope>
    <scope>MASS SPECTROMETRY</scope>
</reference>
<reference key="3">
    <citation type="journal article" date="2006" name="Biol. Chem.">
        <title>Heterogeneity in the cysteine protease inhibitor clitocypin gene family.</title>
        <authorList>
            <person name="Sabotic J."/>
            <person name="Gaser D."/>
            <person name="Rogelj B."/>
            <person name="Gruden K."/>
            <person name="Strukelj B."/>
            <person name="Brzin J."/>
        </authorList>
    </citation>
    <scope>SUBCELLULAR LOCATION</scope>
    <scope>TISSUE SPECIFICITY</scope>
</reference>
<reference key="4">
    <citation type="journal article" date="2011" name="Biochimie">
        <title>Protease inhibitors clitocypin and macrocypin are differentially expressed within basidiomycete fruiting bodies.</title>
        <authorList>
            <person name="Sabotic J."/>
            <person name="Kilaru S."/>
            <person name="Budic M."/>
            <person name="Gasparic M.B."/>
            <person name="Gruden K."/>
            <person name="Bailey A.M."/>
            <person name="Foster G.D."/>
            <person name="Kos J."/>
        </authorList>
    </citation>
    <scope>TISSUE SPECIFICITY</scope>
</reference>
<reference key="5">
    <citation type="journal article" date="2015" name="Pestic. Biochem. Physiol.">
        <title>Clitocypin, a fungal cysteine protease inhibitor, exerts its insecticidal effect on Colorado potato beetle larvae by inhibiting their digestive cysteine proteases.</title>
        <authorList>
            <person name="Smid I."/>
            <person name="Rotter A."/>
            <person name="Gruden K."/>
            <person name="Brzin J."/>
            <person name="Buh Gasparic M."/>
            <person name="Kos J."/>
            <person name="Zel J."/>
            <person name="Sabotic J."/>
        </authorList>
    </citation>
    <scope>BIOTECHNOLOGY</scope>
</reference>
<comment type="function">
    <text evidence="1">Binds and inhibits cysteine proteinases. Inhibits most strongly papain and cathepsin L, more weakly bromelain and cathepsin B while it is completely ineffective against cathepsin H.</text>
</comment>
<comment type="subunit">
    <text evidence="1 3">Homodimer.</text>
</comment>
<comment type="subcellular location">
    <text evidence="2">Not secreted.</text>
</comment>
<comment type="tissue specificity">
    <text evidence="2 4">Uniformly expressed throughout the mature fruiting body (at mRNA and protein level).</text>
</comment>
<comment type="mass spectrometry"/>
<comment type="biotechnology">
    <text evidence="5">Promising candidate for a biopesticide. Slows growth and reduces survival of Colorado potato beetle (Leptinotarsa decemlineata) larvae in a concentration dependent manner. Younger larvae are more susceptible to the action of clitocypin. Expressed at low levels by transgenic potato reduced larval weight gain and delayed development. The inhibition of digestive cysteine proteases, intestains, by clitocypin was shown to be the underlying mode of action.</text>
</comment>
<comment type="similarity">
    <text evidence="6">Belongs to the protease inhibitor I48 family.</text>
</comment>
<name>CLIT_CLINE</name>
<protein>
    <recommendedName>
        <fullName>Clitocypin</fullName>
    </recommendedName>
    <alternativeName>
        <fullName>Cysteine protease inhibitor</fullName>
    </alternativeName>
</protein>
<accession>Q9P4A2</accession>
<accession>P82314</accession>